<reference key="1">
    <citation type="journal article" date="2007" name="PLoS ONE">
        <title>A glimpse of streptococcal toxic shock syndrome from comparative genomics of S. suis 2 Chinese isolates.</title>
        <authorList>
            <person name="Chen C."/>
            <person name="Tang J."/>
            <person name="Dong W."/>
            <person name="Wang C."/>
            <person name="Feng Y."/>
            <person name="Wang J."/>
            <person name="Zheng F."/>
            <person name="Pan X."/>
            <person name="Liu D."/>
            <person name="Li M."/>
            <person name="Song Y."/>
            <person name="Zhu X."/>
            <person name="Sun H."/>
            <person name="Feng T."/>
            <person name="Guo Z."/>
            <person name="Ju A."/>
            <person name="Ge J."/>
            <person name="Dong Y."/>
            <person name="Sun W."/>
            <person name="Jiang Y."/>
            <person name="Wang J."/>
            <person name="Yan J."/>
            <person name="Yang H."/>
            <person name="Wang X."/>
            <person name="Gao G.F."/>
            <person name="Yang R."/>
            <person name="Wang J."/>
            <person name="Yu J."/>
        </authorList>
    </citation>
    <scope>NUCLEOTIDE SEQUENCE [LARGE SCALE GENOMIC DNA]</scope>
    <source>
        <strain>05ZYH33</strain>
    </source>
</reference>
<dbReference type="EC" id="2.1.1.177" evidence="1"/>
<dbReference type="EMBL" id="CP000407">
    <property type="protein sequence ID" value="ABP91157.1"/>
    <property type="status" value="ALT_INIT"/>
    <property type="molecule type" value="Genomic_DNA"/>
</dbReference>
<dbReference type="SMR" id="A4VYG8"/>
<dbReference type="STRING" id="391295.SSU05_2191"/>
<dbReference type="KEGG" id="ssu:SSU05_2191"/>
<dbReference type="eggNOG" id="COG1576">
    <property type="taxonomic scope" value="Bacteria"/>
</dbReference>
<dbReference type="HOGENOM" id="CLU_100552_0_0_9"/>
<dbReference type="GO" id="GO:0005737">
    <property type="term" value="C:cytoplasm"/>
    <property type="evidence" value="ECO:0007669"/>
    <property type="project" value="UniProtKB-SubCell"/>
</dbReference>
<dbReference type="GO" id="GO:0070038">
    <property type="term" value="F:rRNA (pseudouridine-N3-)-methyltransferase activity"/>
    <property type="evidence" value="ECO:0007669"/>
    <property type="project" value="UniProtKB-UniRule"/>
</dbReference>
<dbReference type="CDD" id="cd18081">
    <property type="entry name" value="RlmH-like"/>
    <property type="match status" value="1"/>
</dbReference>
<dbReference type="Gene3D" id="3.40.1280.10">
    <property type="match status" value="1"/>
</dbReference>
<dbReference type="HAMAP" id="MF_00658">
    <property type="entry name" value="23SrRNA_methyltr_H"/>
    <property type="match status" value="1"/>
</dbReference>
<dbReference type="InterPro" id="IPR029028">
    <property type="entry name" value="Alpha/beta_knot_MTases"/>
</dbReference>
<dbReference type="InterPro" id="IPR003742">
    <property type="entry name" value="RlmH-like"/>
</dbReference>
<dbReference type="InterPro" id="IPR029026">
    <property type="entry name" value="tRNA_m1G_MTases_N"/>
</dbReference>
<dbReference type="NCBIfam" id="NF000985">
    <property type="entry name" value="PRK00103.1-3"/>
    <property type="match status" value="1"/>
</dbReference>
<dbReference type="NCBIfam" id="TIGR00246">
    <property type="entry name" value="tRNA_RlmH_YbeA"/>
    <property type="match status" value="1"/>
</dbReference>
<dbReference type="PANTHER" id="PTHR33603">
    <property type="entry name" value="METHYLTRANSFERASE"/>
    <property type="match status" value="1"/>
</dbReference>
<dbReference type="PANTHER" id="PTHR33603:SF1">
    <property type="entry name" value="RIBOSOMAL RNA LARGE SUBUNIT METHYLTRANSFERASE H"/>
    <property type="match status" value="1"/>
</dbReference>
<dbReference type="Pfam" id="PF02590">
    <property type="entry name" value="SPOUT_MTase"/>
    <property type="match status" value="1"/>
</dbReference>
<dbReference type="PIRSF" id="PIRSF004505">
    <property type="entry name" value="MT_bac"/>
    <property type="match status" value="1"/>
</dbReference>
<dbReference type="SUPFAM" id="SSF75217">
    <property type="entry name" value="alpha/beta knot"/>
    <property type="match status" value="1"/>
</dbReference>
<proteinExistence type="inferred from homology"/>
<keyword id="KW-0963">Cytoplasm</keyword>
<keyword id="KW-0489">Methyltransferase</keyword>
<keyword id="KW-0698">rRNA processing</keyword>
<keyword id="KW-0949">S-adenosyl-L-methionine</keyword>
<keyword id="KW-0808">Transferase</keyword>
<sequence>MKIKLITVGKLKEKYLKEGIAEYSKRLGRFTKLDMIELPDEKTPDKASQAENEQILKKEADRIMSKIGERDFVIALAIEGKQFPSEEFSQRISDIAVNGYSDITFIIGGSLGLDSCIKKRANLLMSFGQLTLPHQLMKLVLIEQIYRAFMIQQGSPYHK</sequence>
<evidence type="ECO:0000255" key="1">
    <source>
        <dbReference type="HAMAP-Rule" id="MF_00658"/>
    </source>
</evidence>
<evidence type="ECO:0000305" key="2"/>
<accession>A4VYG8</accession>
<gene>
    <name evidence="1" type="primary">rlmH</name>
    <name type="ordered locus">SSU05_2191</name>
</gene>
<protein>
    <recommendedName>
        <fullName evidence="1">Ribosomal RNA large subunit methyltransferase H</fullName>
        <ecNumber evidence="1">2.1.1.177</ecNumber>
    </recommendedName>
    <alternativeName>
        <fullName evidence="1">23S rRNA (pseudouridine1915-N3)-methyltransferase</fullName>
    </alternativeName>
    <alternativeName>
        <fullName evidence="1">23S rRNA m3Psi1915 methyltransferase</fullName>
    </alternativeName>
    <alternativeName>
        <fullName evidence="1">rRNA (pseudouridine-N3-)-methyltransferase RlmH</fullName>
    </alternativeName>
</protein>
<feature type="chain" id="PRO_0000366664" description="Ribosomal RNA large subunit methyltransferase H">
    <location>
        <begin position="1"/>
        <end position="159"/>
    </location>
</feature>
<feature type="binding site" evidence="1">
    <location>
        <position position="76"/>
    </location>
    <ligand>
        <name>S-adenosyl-L-methionine</name>
        <dbReference type="ChEBI" id="CHEBI:59789"/>
    </ligand>
</feature>
<feature type="binding site" evidence="1">
    <location>
        <position position="108"/>
    </location>
    <ligand>
        <name>S-adenosyl-L-methionine</name>
        <dbReference type="ChEBI" id="CHEBI:59789"/>
    </ligand>
</feature>
<feature type="binding site" evidence="1">
    <location>
        <begin position="127"/>
        <end position="132"/>
    </location>
    <ligand>
        <name>S-adenosyl-L-methionine</name>
        <dbReference type="ChEBI" id="CHEBI:59789"/>
    </ligand>
</feature>
<organism>
    <name type="scientific">Streptococcus suis (strain 05ZYH33)</name>
    <dbReference type="NCBI Taxonomy" id="391295"/>
    <lineage>
        <taxon>Bacteria</taxon>
        <taxon>Bacillati</taxon>
        <taxon>Bacillota</taxon>
        <taxon>Bacilli</taxon>
        <taxon>Lactobacillales</taxon>
        <taxon>Streptococcaceae</taxon>
        <taxon>Streptococcus</taxon>
    </lineage>
</organism>
<comment type="function">
    <text evidence="1">Specifically methylates the pseudouridine at position 1915 (m3Psi1915) in 23S rRNA.</text>
</comment>
<comment type="catalytic activity">
    <reaction evidence="1">
        <text>pseudouridine(1915) in 23S rRNA + S-adenosyl-L-methionine = N(3)-methylpseudouridine(1915) in 23S rRNA + S-adenosyl-L-homocysteine + H(+)</text>
        <dbReference type="Rhea" id="RHEA:42752"/>
        <dbReference type="Rhea" id="RHEA-COMP:10221"/>
        <dbReference type="Rhea" id="RHEA-COMP:10222"/>
        <dbReference type="ChEBI" id="CHEBI:15378"/>
        <dbReference type="ChEBI" id="CHEBI:57856"/>
        <dbReference type="ChEBI" id="CHEBI:59789"/>
        <dbReference type="ChEBI" id="CHEBI:65314"/>
        <dbReference type="ChEBI" id="CHEBI:74486"/>
        <dbReference type="EC" id="2.1.1.177"/>
    </reaction>
</comment>
<comment type="subunit">
    <text evidence="1">Homodimer.</text>
</comment>
<comment type="subcellular location">
    <subcellularLocation>
        <location evidence="1">Cytoplasm</location>
    </subcellularLocation>
</comment>
<comment type="similarity">
    <text evidence="1">Belongs to the RNA methyltransferase RlmH family.</text>
</comment>
<comment type="sequence caution" evidence="2">
    <conflict type="erroneous initiation">
        <sequence resource="EMBL-CDS" id="ABP91157"/>
    </conflict>
</comment>
<name>RLMH_STRSY</name>